<comment type="function">
    <text evidence="1">Involved in the biosynthesis of branched-chain amino acids (BCAA). Catalyzes an alkyl-migration followed by a ketol-acid reduction of (S)-2-acetolactate (S2AL) to yield (R)-2,3-dihydroxy-isovalerate. In the isomerase reaction, S2AL is rearranged via a Mg-dependent methyl migration to produce 3-hydroxy-3-methyl-2-ketobutyrate (HMKB). In the reductase reaction, this 2-ketoacid undergoes a metal-dependent reduction by NADPH to yield (R)-2,3-dihydroxy-isovalerate.</text>
</comment>
<comment type="catalytic activity">
    <reaction evidence="1">
        <text>(2R)-2,3-dihydroxy-3-methylbutanoate + NADP(+) = (2S)-2-acetolactate + NADPH + H(+)</text>
        <dbReference type="Rhea" id="RHEA:22068"/>
        <dbReference type="ChEBI" id="CHEBI:15378"/>
        <dbReference type="ChEBI" id="CHEBI:49072"/>
        <dbReference type="ChEBI" id="CHEBI:57783"/>
        <dbReference type="ChEBI" id="CHEBI:58349"/>
        <dbReference type="ChEBI" id="CHEBI:58476"/>
        <dbReference type="EC" id="1.1.1.86"/>
    </reaction>
</comment>
<comment type="catalytic activity">
    <reaction evidence="1">
        <text>(2R,3R)-2,3-dihydroxy-3-methylpentanoate + NADP(+) = (S)-2-ethyl-2-hydroxy-3-oxobutanoate + NADPH + H(+)</text>
        <dbReference type="Rhea" id="RHEA:13493"/>
        <dbReference type="ChEBI" id="CHEBI:15378"/>
        <dbReference type="ChEBI" id="CHEBI:49256"/>
        <dbReference type="ChEBI" id="CHEBI:49258"/>
        <dbReference type="ChEBI" id="CHEBI:57783"/>
        <dbReference type="ChEBI" id="CHEBI:58349"/>
        <dbReference type="EC" id="1.1.1.86"/>
    </reaction>
</comment>
<comment type="cofactor">
    <cofactor evidence="1">
        <name>Mg(2+)</name>
        <dbReference type="ChEBI" id="CHEBI:18420"/>
    </cofactor>
    <text evidence="1">Binds 2 magnesium ions per subunit.</text>
</comment>
<comment type="pathway">
    <text evidence="1">Amino-acid biosynthesis; L-isoleucine biosynthesis; L-isoleucine from 2-oxobutanoate: step 2/4.</text>
</comment>
<comment type="pathway">
    <text evidence="1">Amino-acid biosynthesis; L-valine biosynthesis; L-valine from pyruvate: step 2/4.</text>
</comment>
<comment type="similarity">
    <text evidence="1">Belongs to the ketol-acid reductoisomerase family.</text>
</comment>
<protein>
    <recommendedName>
        <fullName evidence="1">Ketol-acid reductoisomerase (NADP(+))</fullName>
        <shortName evidence="1">KARI</shortName>
        <ecNumber evidence="1">1.1.1.86</ecNumber>
    </recommendedName>
    <alternativeName>
        <fullName evidence="1">Acetohydroxy-acid isomeroreductase</fullName>
        <shortName evidence="1">AHIR</shortName>
    </alternativeName>
    <alternativeName>
        <fullName evidence="1">Alpha-keto-beta-hydroxylacyl reductoisomerase</fullName>
    </alternativeName>
    <alternativeName>
        <fullName evidence="1">Ketol-acid reductoisomerase type 1</fullName>
    </alternativeName>
    <alternativeName>
        <fullName evidence="1">Ketol-acid reductoisomerase type I</fullName>
    </alternativeName>
</protein>
<gene>
    <name evidence="1" type="primary">ilvC</name>
    <name type="ordered locus">Pcal_1755</name>
</gene>
<organism>
    <name type="scientific">Pyrobaculum calidifontis (strain DSM 21063 / JCM 11548 / VA1)</name>
    <dbReference type="NCBI Taxonomy" id="410359"/>
    <lineage>
        <taxon>Archaea</taxon>
        <taxon>Thermoproteota</taxon>
        <taxon>Thermoprotei</taxon>
        <taxon>Thermoproteales</taxon>
        <taxon>Thermoproteaceae</taxon>
        <taxon>Pyrobaculum</taxon>
    </lineage>
</organism>
<evidence type="ECO:0000255" key="1">
    <source>
        <dbReference type="HAMAP-Rule" id="MF_00435"/>
    </source>
</evidence>
<evidence type="ECO:0000255" key="2">
    <source>
        <dbReference type="PROSITE-ProRule" id="PRU01197"/>
    </source>
</evidence>
<evidence type="ECO:0000255" key="3">
    <source>
        <dbReference type="PROSITE-ProRule" id="PRU01198"/>
    </source>
</evidence>
<name>ILVC_PYRCJ</name>
<accession>A3MX05</accession>
<sequence>MAKIYRDGDASLDWLKGKTIAVIGYGIQGRAQALNLRDSGLDVIIGARRGGNSWEAARRDGFQVYEVGEAVAKADVVMMLIPDMEQPHVWREQVAPNLRKGAVVDFAHGFNIHYKLITPPPYVDVVMVAPKGPGKAVREEFLAGRGVPALVAVYQDYSGAALKYALAIAKGIGATRAGVIETTFAEETETDLIGEQVVLVGGLMELIKKGFEVLVEMGYQPEVAYFEVLNEAKLIMDLIWQRGIYGMLNGVSDTAKYGGLTVGPRVIDDEVKEKMRRAAARVKSGEFAKEWVEEYQRGAPRLRELMEKAKNHPIEAVGAEMRKLLFGP</sequence>
<keyword id="KW-0028">Amino-acid biosynthesis</keyword>
<keyword id="KW-0100">Branched-chain amino acid biosynthesis</keyword>
<keyword id="KW-0460">Magnesium</keyword>
<keyword id="KW-0479">Metal-binding</keyword>
<keyword id="KW-0521">NADP</keyword>
<keyword id="KW-0560">Oxidoreductase</keyword>
<proteinExistence type="inferred from homology"/>
<reference key="1">
    <citation type="submission" date="2007-02" db="EMBL/GenBank/DDBJ databases">
        <title>Complete sequence of Pyrobaculum calidifontis JCM 11548.</title>
        <authorList>
            <consortium name="US DOE Joint Genome Institute"/>
            <person name="Copeland A."/>
            <person name="Lucas S."/>
            <person name="Lapidus A."/>
            <person name="Barry K."/>
            <person name="Glavina del Rio T."/>
            <person name="Dalin E."/>
            <person name="Tice H."/>
            <person name="Pitluck S."/>
            <person name="Chain P."/>
            <person name="Malfatti S."/>
            <person name="Shin M."/>
            <person name="Vergez L."/>
            <person name="Schmutz J."/>
            <person name="Larimer F."/>
            <person name="Land M."/>
            <person name="Hauser L."/>
            <person name="Kyrpides N."/>
            <person name="Mikhailova N."/>
            <person name="Cozen A.E."/>
            <person name="Fitz-Gibbon S.T."/>
            <person name="House C.H."/>
            <person name="Saltikov C."/>
            <person name="Lowe T.M."/>
            <person name="Richardson P."/>
        </authorList>
    </citation>
    <scope>NUCLEOTIDE SEQUENCE [LARGE SCALE GENOMIC DNA]</scope>
    <source>
        <strain>DSM 21063 / JCM 11548 / VA1</strain>
    </source>
</reference>
<feature type="chain" id="PRO_1000050565" description="Ketol-acid reductoisomerase (NADP(+))">
    <location>
        <begin position="1"/>
        <end position="328"/>
    </location>
</feature>
<feature type="domain" description="KARI N-terminal Rossmann" evidence="2">
    <location>
        <begin position="2"/>
        <end position="182"/>
    </location>
</feature>
<feature type="domain" description="KARI C-terminal knotted" evidence="3">
    <location>
        <begin position="183"/>
        <end position="328"/>
    </location>
</feature>
<feature type="active site" evidence="1">
    <location>
        <position position="108"/>
    </location>
</feature>
<feature type="binding site" evidence="1">
    <location>
        <begin position="25"/>
        <end position="28"/>
    </location>
    <ligand>
        <name>NADP(+)</name>
        <dbReference type="ChEBI" id="CHEBI:58349"/>
    </ligand>
</feature>
<feature type="binding site" evidence="1">
    <location>
        <position position="48"/>
    </location>
    <ligand>
        <name>NADP(+)</name>
        <dbReference type="ChEBI" id="CHEBI:58349"/>
    </ligand>
</feature>
<feature type="binding site" evidence="1">
    <location>
        <position position="53"/>
    </location>
    <ligand>
        <name>NADP(+)</name>
        <dbReference type="ChEBI" id="CHEBI:58349"/>
    </ligand>
</feature>
<feature type="binding site" evidence="1">
    <location>
        <begin position="83"/>
        <end position="86"/>
    </location>
    <ligand>
        <name>NADP(+)</name>
        <dbReference type="ChEBI" id="CHEBI:58349"/>
    </ligand>
</feature>
<feature type="binding site" evidence="1">
    <location>
        <position position="134"/>
    </location>
    <ligand>
        <name>NADP(+)</name>
        <dbReference type="ChEBI" id="CHEBI:58349"/>
    </ligand>
</feature>
<feature type="binding site" evidence="1">
    <location>
        <position position="191"/>
    </location>
    <ligand>
        <name>Mg(2+)</name>
        <dbReference type="ChEBI" id="CHEBI:18420"/>
        <label>1</label>
    </ligand>
</feature>
<feature type="binding site" evidence="1">
    <location>
        <position position="191"/>
    </location>
    <ligand>
        <name>Mg(2+)</name>
        <dbReference type="ChEBI" id="CHEBI:18420"/>
        <label>2</label>
    </ligand>
</feature>
<feature type="binding site" evidence="1">
    <location>
        <position position="195"/>
    </location>
    <ligand>
        <name>Mg(2+)</name>
        <dbReference type="ChEBI" id="CHEBI:18420"/>
        <label>1</label>
    </ligand>
</feature>
<feature type="binding site" evidence="1">
    <location>
        <position position="227"/>
    </location>
    <ligand>
        <name>Mg(2+)</name>
        <dbReference type="ChEBI" id="CHEBI:18420"/>
        <label>2</label>
    </ligand>
</feature>
<feature type="binding site" evidence="1">
    <location>
        <position position="231"/>
    </location>
    <ligand>
        <name>Mg(2+)</name>
        <dbReference type="ChEBI" id="CHEBI:18420"/>
        <label>2</label>
    </ligand>
</feature>
<feature type="binding site" evidence="1">
    <location>
        <position position="252"/>
    </location>
    <ligand>
        <name>substrate</name>
    </ligand>
</feature>
<dbReference type="EC" id="1.1.1.86" evidence="1"/>
<dbReference type="EMBL" id="CP000561">
    <property type="protein sequence ID" value="ABO09172.1"/>
    <property type="molecule type" value="Genomic_DNA"/>
</dbReference>
<dbReference type="SMR" id="A3MX05"/>
<dbReference type="STRING" id="410359.Pcal_1755"/>
<dbReference type="KEGG" id="pcl:Pcal_1755"/>
<dbReference type="eggNOG" id="arCOG04465">
    <property type="taxonomic scope" value="Archaea"/>
</dbReference>
<dbReference type="HOGENOM" id="CLU_033821_0_1_2"/>
<dbReference type="OrthoDB" id="6064at2157"/>
<dbReference type="UniPathway" id="UPA00047">
    <property type="reaction ID" value="UER00056"/>
</dbReference>
<dbReference type="UniPathway" id="UPA00049">
    <property type="reaction ID" value="UER00060"/>
</dbReference>
<dbReference type="Proteomes" id="UP000001431">
    <property type="component" value="Chromosome"/>
</dbReference>
<dbReference type="GO" id="GO:0004455">
    <property type="term" value="F:ketol-acid reductoisomerase activity"/>
    <property type="evidence" value="ECO:0007669"/>
    <property type="project" value="UniProtKB-UniRule"/>
</dbReference>
<dbReference type="GO" id="GO:0000287">
    <property type="term" value="F:magnesium ion binding"/>
    <property type="evidence" value="ECO:0007669"/>
    <property type="project" value="UniProtKB-UniRule"/>
</dbReference>
<dbReference type="GO" id="GO:0050661">
    <property type="term" value="F:NADP binding"/>
    <property type="evidence" value="ECO:0007669"/>
    <property type="project" value="InterPro"/>
</dbReference>
<dbReference type="GO" id="GO:0009097">
    <property type="term" value="P:isoleucine biosynthetic process"/>
    <property type="evidence" value="ECO:0007669"/>
    <property type="project" value="UniProtKB-UniRule"/>
</dbReference>
<dbReference type="GO" id="GO:0009099">
    <property type="term" value="P:L-valine biosynthetic process"/>
    <property type="evidence" value="ECO:0007669"/>
    <property type="project" value="UniProtKB-UniRule"/>
</dbReference>
<dbReference type="FunFam" id="3.40.50.720:FF:000023">
    <property type="entry name" value="Ketol-acid reductoisomerase (NADP(+))"/>
    <property type="match status" value="1"/>
</dbReference>
<dbReference type="Gene3D" id="6.10.240.10">
    <property type="match status" value="1"/>
</dbReference>
<dbReference type="Gene3D" id="3.40.50.720">
    <property type="entry name" value="NAD(P)-binding Rossmann-like Domain"/>
    <property type="match status" value="1"/>
</dbReference>
<dbReference type="HAMAP" id="MF_00435">
    <property type="entry name" value="IlvC"/>
    <property type="match status" value="1"/>
</dbReference>
<dbReference type="InterPro" id="IPR008927">
    <property type="entry name" value="6-PGluconate_DH-like_C_sf"/>
</dbReference>
<dbReference type="InterPro" id="IPR013023">
    <property type="entry name" value="KARI"/>
</dbReference>
<dbReference type="InterPro" id="IPR000506">
    <property type="entry name" value="KARI_C"/>
</dbReference>
<dbReference type="InterPro" id="IPR013116">
    <property type="entry name" value="KARI_N"/>
</dbReference>
<dbReference type="InterPro" id="IPR014359">
    <property type="entry name" value="KARI_prok"/>
</dbReference>
<dbReference type="InterPro" id="IPR036291">
    <property type="entry name" value="NAD(P)-bd_dom_sf"/>
</dbReference>
<dbReference type="NCBIfam" id="TIGR00465">
    <property type="entry name" value="ilvC"/>
    <property type="match status" value="1"/>
</dbReference>
<dbReference type="NCBIfam" id="NF004017">
    <property type="entry name" value="PRK05479.1"/>
    <property type="match status" value="1"/>
</dbReference>
<dbReference type="PANTHER" id="PTHR21371">
    <property type="entry name" value="KETOL-ACID REDUCTOISOMERASE, MITOCHONDRIAL"/>
    <property type="match status" value="1"/>
</dbReference>
<dbReference type="PANTHER" id="PTHR21371:SF1">
    <property type="entry name" value="KETOL-ACID REDUCTOISOMERASE, MITOCHONDRIAL"/>
    <property type="match status" value="1"/>
</dbReference>
<dbReference type="Pfam" id="PF01450">
    <property type="entry name" value="KARI_C"/>
    <property type="match status" value="1"/>
</dbReference>
<dbReference type="Pfam" id="PF07991">
    <property type="entry name" value="KARI_N"/>
    <property type="match status" value="1"/>
</dbReference>
<dbReference type="PIRSF" id="PIRSF000116">
    <property type="entry name" value="IlvC_gammaproteo"/>
    <property type="match status" value="1"/>
</dbReference>
<dbReference type="SUPFAM" id="SSF48179">
    <property type="entry name" value="6-phosphogluconate dehydrogenase C-terminal domain-like"/>
    <property type="match status" value="1"/>
</dbReference>
<dbReference type="SUPFAM" id="SSF51735">
    <property type="entry name" value="NAD(P)-binding Rossmann-fold domains"/>
    <property type="match status" value="1"/>
</dbReference>
<dbReference type="PROSITE" id="PS51851">
    <property type="entry name" value="KARI_C"/>
    <property type="match status" value="1"/>
</dbReference>
<dbReference type="PROSITE" id="PS51850">
    <property type="entry name" value="KARI_N"/>
    <property type="match status" value="1"/>
</dbReference>